<feature type="chain" id="PRO_1000014599" description="Small ribosomal subunit protein bS20">
    <location>
        <begin position="1"/>
        <end position="84"/>
    </location>
</feature>
<feature type="region of interest" description="Disordered" evidence="2">
    <location>
        <begin position="1"/>
        <end position="28"/>
    </location>
</feature>
<gene>
    <name evidence="1" type="primary">rpsT</name>
    <name type="ordered locus">lwe1493</name>
</gene>
<dbReference type="EMBL" id="AM263198">
    <property type="protein sequence ID" value="CAK20911.1"/>
    <property type="molecule type" value="Genomic_DNA"/>
</dbReference>
<dbReference type="RefSeq" id="WP_011702284.1">
    <property type="nucleotide sequence ID" value="NC_008555.1"/>
</dbReference>
<dbReference type="SMR" id="A0AIS9"/>
<dbReference type="STRING" id="386043.lwe1493"/>
<dbReference type="GeneID" id="61189369"/>
<dbReference type="KEGG" id="lwe:lwe1493"/>
<dbReference type="eggNOG" id="COG0268">
    <property type="taxonomic scope" value="Bacteria"/>
</dbReference>
<dbReference type="HOGENOM" id="CLU_160655_1_0_9"/>
<dbReference type="OrthoDB" id="9808392at2"/>
<dbReference type="Proteomes" id="UP000000779">
    <property type="component" value="Chromosome"/>
</dbReference>
<dbReference type="GO" id="GO:0005829">
    <property type="term" value="C:cytosol"/>
    <property type="evidence" value="ECO:0007669"/>
    <property type="project" value="TreeGrafter"/>
</dbReference>
<dbReference type="GO" id="GO:0015935">
    <property type="term" value="C:small ribosomal subunit"/>
    <property type="evidence" value="ECO:0007669"/>
    <property type="project" value="TreeGrafter"/>
</dbReference>
<dbReference type="GO" id="GO:0070181">
    <property type="term" value="F:small ribosomal subunit rRNA binding"/>
    <property type="evidence" value="ECO:0007669"/>
    <property type="project" value="TreeGrafter"/>
</dbReference>
<dbReference type="GO" id="GO:0003735">
    <property type="term" value="F:structural constituent of ribosome"/>
    <property type="evidence" value="ECO:0007669"/>
    <property type="project" value="InterPro"/>
</dbReference>
<dbReference type="GO" id="GO:0006412">
    <property type="term" value="P:translation"/>
    <property type="evidence" value="ECO:0007669"/>
    <property type="project" value="UniProtKB-UniRule"/>
</dbReference>
<dbReference type="FunFam" id="1.20.58.110:FF:000001">
    <property type="entry name" value="30S ribosomal protein S20"/>
    <property type="match status" value="1"/>
</dbReference>
<dbReference type="Gene3D" id="1.20.58.110">
    <property type="entry name" value="Ribosomal protein S20"/>
    <property type="match status" value="1"/>
</dbReference>
<dbReference type="HAMAP" id="MF_00500">
    <property type="entry name" value="Ribosomal_bS20"/>
    <property type="match status" value="1"/>
</dbReference>
<dbReference type="InterPro" id="IPR002583">
    <property type="entry name" value="Ribosomal_bS20"/>
</dbReference>
<dbReference type="InterPro" id="IPR036510">
    <property type="entry name" value="Ribosomal_bS20_sf"/>
</dbReference>
<dbReference type="NCBIfam" id="TIGR00029">
    <property type="entry name" value="S20"/>
    <property type="match status" value="1"/>
</dbReference>
<dbReference type="PANTHER" id="PTHR33398">
    <property type="entry name" value="30S RIBOSOMAL PROTEIN S20"/>
    <property type="match status" value="1"/>
</dbReference>
<dbReference type="PANTHER" id="PTHR33398:SF1">
    <property type="entry name" value="SMALL RIBOSOMAL SUBUNIT PROTEIN BS20C"/>
    <property type="match status" value="1"/>
</dbReference>
<dbReference type="Pfam" id="PF01649">
    <property type="entry name" value="Ribosomal_S20p"/>
    <property type="match status" value="1"/>
</dbReference>
<dbReference type="SUPFAM" id="SSF46992">
    <property type="entry name" value="Ribosomal protein S20"/>
    <property type="match status" value="1"/>
</dbReference>
<protein>
    <recommendedName>
        <fullName evidence="1">Small ribosomal subunit protein bS20</fullName>
    </recommendedName>
    <alternativeName>
        <fullName evidence="3">30S ribosomal protein S20</fullName>
    </alternativeName>
</protein>
<reference key="1">
    <citation type="journal article" date="2006" name="J. Bacteriol.">
        <title>Whole-genome sequence of Listeria welshimeri reveals common steps in genome reduction with Listeria innocua as compared to Listeria monocytogenes.</title>
        <authorList>
            <person name="Hain T."/>
            <person name="Steinweg C."/>
            <person name="Kuenne C.T."/>
            <person name="Billion A."/>
            <person name="Ghai R."/>
            <person name="Chatterjee S.S."/>
            <person name="Domann E."/>
            <person name="Kaerst U."/>
            <person name="Goesmann A."/>
            <person name="Bekel T."/>
            <person name="Bartels D."/>
            <person name="Kaiser O."/>
            <person name="Meyer F."/>
            <person name="Puehler A."/>
            <person name="Weisshaar B."/>
            <person name="Wehland J."/>
            <person name="Liang C."/>
            <person name="Dandekar T."/>
            <person name="Lampidis R."/>
            <person name="Kreft J."/>
            <person name="Goebel W."/>
            <person name="Chakraborty T."/>
        </authorList>
    </citation>
    <scope>NUCLEOTIDE SEQUENCE [LARGE SCALE GENOMIC DNA]</scope>
    <source>
        <strain>ATCC 35897 / DSM 20650 / CCUG 15529 / CIP 8149 / NCTC 11857 / SLCC 5334 / V8</strain>
    </source>
</reference>
<name>RS20_LISW6</name>
<organism>
    <name type="scientific">Listeria welshimeri serovar 6b (strain ATCC 35897 / DSM 20650 / CCUG 15529 / CIP 8149 / NCTC 11857 / SLCC 5334 / V8)</name>
    <dbReference type="NCBI Taxonomy" id="386043"/>
    <lineage>
        <taxon>Bacteria</taxon>
        <taxon>Bacillati</taxon>
        <taxon>Bacillota</taxon>
        <taxon>Bacilli</taxon>
        <taxon>Bacillales</taxon>
        <taxon>Listeriaceae</taxon>
        <taxon>Listeria</taxon>
    </lineage>
</organism>
<keyword id="KW-0687">Ribonucleoprotein</keyword>
<keyword id="KW-0689">Ribosomal protein</keyword>
<keyword id="KW-0694">RNA-binding</keyword>
<keyword id="KW-0699">rRNA-binding</keyword>
<accession>A0AIS9</accession>
<comment type="function">
    <text evidence="1">Binds directly to 16S ribosomal RNA.</text>
</comment>
<comment type="similarity">
    <text evidence="1">Belongs to the bacterial ribosomal protein bS20 family.</text>
</comment>
<sequence length="84" mass="9154">MPNIKSAIKRVKTADTRNSRNASQRSAMRTAIKKFDEAAANNADNAKDLYVEASKKLDSAVSKGLIHKNNAARNKSRLAAKLAK</sequence>
<evidence type="ECO:0000255" key="1">
    <source>
        <dbReference type="HAMAP-Rule" id="MF_00500"/>
    </source>
</evidence>
<evidence type="ECO:0000256" key="2">
    <source>
        <dbReference type="SAM" id="MobiDB-lite"/>
    </source>
</evidence>
<evidence type="ECO:0000305" key="3"/>
<proteinExistence type="inferred from homology"/>